<comment type="function">
    <text evidence="1">Positive regulator of phosphatidylinositol 4,5-bisphosphate turnover and negatively regulates signaling through the cell integrity pathway. Involved in rDNA silencing (By similarity).</text>
</comment>
<comment type="similarity">
    <text evidence="5">Belongs to the IRS4 family.</text>
</comment>
<sequence>MASNNSTSQLAALAAFKAINNKKNEESQPNNRSRIPLKVDTTAPPQTQMKALNSATRAKSSNKISQTQADKTRGQTSERKDQKTTPTGSNMTNIFKMPNTPKTPKISKSAETPNSVGASRRSSTYSNSFAVESLENEPPKNDNFGEPLSTVNNLERRKTVSQHSLNYDPQDMIRNVKNSIGSKYISNDLSPGQVNTKRLSTGTQPKDMLDSVRNSINSKTKTNSKNQEMSQRNALILNGIRDSIDSKRISSHHDNSTISLPLAEERDKILKSISKSNNPEEQLMLYGQPIYNYSSSSFASSFSENDNDQLRTPVIIRTDMDLLDPDSNASIQHDERENYSNEDDDFEYNDTYDTKEDKEVSPINIPLSSHACARLGISNNDTPKTFMNLRIQTPDKEDSSRLKPKRKPPPEMDNDSISPTFTEQSDGYQTEGDDRMSDASSNRTRRHSVQYNDYGGYSDASSKSQIKVNDDSDYSYFDESDLSGSETPSVEKIDNDKSFLDDRLPIFPDIKAKSRKLFRNRKSKPIYNSDDPDTSKSDLQSATEELKNISVPSRTSTPVMGHQSQPVQLKATMRTNKKREKKYSFNENKPWKNHSELSYIAESERKRYEGLWVSNKGLYINCAVSRFIGVDYNGKPEIESQIENQDAPTTAALLSSRTTNEDNSNVVQQNFHNLLSAETSQLIHGVVVKRIWKRSRLPKETLEAIWDLVDFRKDGTLNKPEFLVGMWLVDQCLYGRKLPKKVDGTVWNSLGNVGLNVVLKKKGRR</sequence>
<evidence type="ECO:0000250" key="1"/>
<evidence type="ECO:0000255" key="2">
    <source>
        <dbReference type="PROSITE-ProRule" id="PRU00077"/>
    </source>
</evidence>
<evidence type="ECO:0000255" key="3">
    <source>
        <dbReference type="PROSITE-ProRule" id="PRU00448"/>
    </source>
</evidence>
<evidence type="ECO:0000256" key="4">
    <source>
        <dbReference type="SAM" id="MobiDB-lite"/>
    </source>
</evidence>
<evidence type="ECO:0000305" key="5"/>
<keyword id="KW-0443">Lipid metabolism</keyword>
<keyword id="KW-1185">Reference proteome</keyword>
<accession>Q6BRH9</accession>
<dbReference type="EMBL" id="CR382136">
    <property type="protein sequence ID" value="CAG87362.2"/>
    <property type="molecule type" value="Genomic_DNA"/>
</dbReference>
<dbReference type="RefSeq" id="XP_459191.2">
    <property type="nucleotide sequence ID" value="XM_459191.1"/>
</dbReference>
<dbReference type="SMR" id="Q6BRH9"/>
<dbReference type="STRING" id="284592.Q6BRH9"/>
<dbReference type="GeneID" id="2901811"/>
<dbReference type="KEGG" id="dha:DEHA2D16236g"/>
<dbReference type="VEuPathDB" id="FungiDB:DEHA2D16236g"/>
<dbReference type="eggNOG" id="KOG0998">
    <property type="taxonomic scope" value="Eukaryota"/>
</dbReference>
<dbReference type="HOGENOM" id="CLU_020874_0_0_1"/>
<dbReference type="InParanoid" id="Q6BRH9"/>
<dbReference type="OMA" id="WDLVDFR"/>
<dbReference type="OrthoDB" id="10045710at2759"/>
<dbReference type="Proteomes" id="UP000000599">
    <property type="component" value="Chromosome D"/>
</dbReference>
<dbReference type="GO" id="GO:0005737">
    <property type="term" value="C:cytoplasm"/>
    <property type="evidence" value="ECO:0007669"/>
    <property type="project" value="TreeGrafter"/>
</dbReference>
<dbReference type="GO" id="GO:0005886">
    <property type="term" value="C:plasma membrane"/>
    <property type="evidence" value="ECO:0007669"/>
    <property type="project" value="TreeGrafter"/>
</dbReference>
<dbReference type="GO" id="GO:0005509">
    <property type="term" value="F:calcium ion binding"/>
    <property type="evidence" value="ECO:0007669"/>
    <property type="project" value="InterPro"/>
</dbReference>
<dbReference type="GO" id="GO:0006897">
    <property type="term" value="P:endocytosis"/>
    <property type="evidence" value="ECO:0007669"/>
    <property type="project" value="UniProtKB-ARBA"/>
</dbReference>
<dbReference type="GO" id="GO:0006629">
    <property type="term" value="P:lipid metabolic process"/>
    <property type="evidence" value="ECO:0007669"/>
    <property type="project" value="UniProtKB-KW"/>
</dbReference>
<dbReference type="CDD" id="cd00052">
    <property type="entry name" value="EH"/>
    <property type="match status" value="1"/>
</dbReference>
<dbReference type="Gene3D" id="1.10.238.10">
    <property type="entry name" value="EF-hand"/>
    <property type="match status" value="1"/>
</dbReference>
<dbReference type="InterPro" id="IPR011992">
    <property type="entry name" value="EF-hand-dom_pair"/>
</dbReference>
<dbReference type="InterPro" id="IPR002048">
    <property type="entry name" value="EF_hand_dom"/>
</dbReference>
<dbReference type="InterPro" id="IPR000261">
    <property type="entry name" value="EH_dom"/>
</dbReference>
<dbReference type="PANTHER" id="PTHR11216">
    <property type="entry name" value="EH DOMAIN"/>
    <property type="match status" value="1"/>
</dbReference>
<dbReference type="PANTHER" id="PTHR11216:SF174">
    <property type="entry name" value="GH06923P"/>
    <property type="match status" value="1"/>
</dbReference>
<dbReference type="Pfam" id="PF12763">
    <property type="entry name" value="EH"/>
    <property type="match status" value="1"/>
</dbReference>
<dbReference type="SMART" id="SM00027">
    <property type="entry name" value="EH"/>
    <property type="match status" value="1"/>
</dbReference>
<dbReference type="SUPFAM" id="SSF47473">
    <property type="entry name" value="EF-hand"/>
    <property type="match status" value="1"/>
</dbReference>
<dbReference type="PROSITE" id="PS50222">
    <property type="entry name" value="EF_HAND_2"/>
    <property type="match status" value="1"/>
</dbReference>
<dbReference type="PROSITE" id="PS50031">
    <property type="entry name" value="EH"/>
    <property type="match status" value="1"/>
</dbReference>
<proteinExistence type="inferred from homology"/>
<feature type="chain" id="PRO_0000308756" description="Increased rDNA silencing protein 4">
    <location>
        <begin position="1"/>
        <end position="765"/>
    </location>
</feature>
<feature type="domain" description="EH" evidence="2">
    <location>
        <begin position="663"/>
        <end position="753"/>
    </location>
</feature>
<feature type="domain" description="EF-hand" evidence="3">
    <location>
        <begin position="697"/>
        <end position="732"/>
    </location>
</feature>
<feature type="region of interest" description="Disordered" evidence="4">
    <location>
        <begin position="20"/>
        <end position="124"/>
    </location>
</feature>
<feature type="region of interest" description="Disordered" evidence="4">
    <location>
        <begin position="187"/>
        <end position="206"/>
    </location>
</feature>
<feature type="region of interest" description="Disordered" evidence="4">
    <location>
        <begin position="321"/>
        <end position="362"/>
    </location>
</feature>
<feature type="region of interest" description="Disordered" evidence="4">
    <location>
        <begin position="390"/>
        <end position="466"/>
    </location>
</feature>
<feature type="compositionally biased region" description="Polar residues" evidence="4">
    <location>
        <begin position="43"/>
        <end position="69"/>
    </location>
</feature>
<feature type="compositionally biased region" description="Basic and acidic residues" evidence="4">
    <location>
        <begin position="70"/>
        <end position="83"/>
    </location>
</feature>
<feature type="compositionally biased region" description="Polar residues" evidence="4">
    <location>
        <begin position="84"/>
        <end position="93"/>
    </location>
</feature>
<feature type="compositionally biased region" description="Polar residues" evidence="4">
    <location>
        <begin position="109"/>
        <end position="124"/>
    </location>
</feature>
<feature type="compositionally biased region" description="Polar residues" evidence="4">
    <location>
        <begin position="187"/>
        <end position="204"/>
    </location>
</feature>
<feature type="compositionally biased region" description="Acidic residues" evidence="4">
    <location>
        <begin position="340"/>
        <end position="350"/>
    </location>
</feature>
<feature type="compositionally biased region" description="Polar residues" evidence="4">
    <location>
        <begin position="415"/>
        <end position="428"/>
    </location>
</feature>
<reference key="1">
    <citation type="journal article" date="2004" name="Nature">
        <title>Genome evolution in yeasts.</title>
        <authorList>
            <person name="Dujon B."/>
            <person name="Sherman D."/>
            <person name="Fischer G."/>
            <person name="Durrens P."/>
            <person name="Casaregola S."/>
            <person name="Lafontaine I."/>
            <person name="de Montigny J."/>
            <person name="Marck C."/>
            <person name="Neuveglise C."/>
            <person name="Talla E."/>
            <person name="Goffard N."/>
            <person name="Frangeul L."/>
            <person name="Aigle M."/>
            <person name="Anthouard V."/>
            <person name="Babour A."/>
            <person name="Barbe V."/>
            <person name="Barnay S."/>
            <person name="Blanchin S."/>
            <person name="Beckerich J.-M."/>
            <person name="Beyne E."/>
            <person name="Bleykasten C."/>
            <person name="Boisrame A."/>
            <person name="Boyer J."/>
            <person name="Cattolico L."/>
            <person name="Confanioleri F."/>
            <person name="de Daruvar A."/>
            <person name="Despons L."/>
            <person name="Fabre E."/>
            <person name="Fairhead C."/>
            <person name="Ferry-Dumazet H."/>
            <person name="Groppi A."/>
            <person name="Hantraye F."/>
            <person name="Hennequin C."/>
            <person name="Jauniaux N."/>
            <person name="Joyet P."/>
            <person name="Kachouri R."/>
            <person name="Kerrest A."/>
            <person name="Koszul R."/>
            <person name="Lemaire M."/>
            <person name="Lesur I."/>
            <person name="Ma L."/>
            <person name="Muller H."/>
            <person name="Nicaud J.-M."/>
            <person name="Nikolski M."/>
            <person name="Oztas S."/>
            <person name="Ozier-Kalogeropoulos O."/>
            <person name="Pellenz S."/>
            <person name="Potier S."/>
            <person name="Richard G.-F."/>
            <person name="Straub M.-L."/>
            <person name="Suleau A."/>
            <person name="Swennen D."/>
            <person name="Tekaia F."/>
            <person name="Wesolowski-Louvel M."/>
            <person name="Westhof E."/>
            <person name="Wirth B."/>
            <person name="Zeniou-Meyer M."/>
            <person name="Zivanovic Y."/>
            <person name="Bolotin-Fukuhara M."/>
            <person name="Thierry A."/>
            <person name="Bouchier C."/>
            <person name="Caudron B."/>
            <person name="Scarpelli C."/>
            <person name="Gaillardin C."/>
            <person name="Weissenbach J."/>
            <person name="Wincker P."/>
            <person name="Souciet J.-L."/>
        </authorList>
    </citation>
    <scope>NUCLEOTIDE SEQUENCE [LARGE SCALE GENOMIC DNA]</scope>
    <source>
        <strain>ATCC 36239 / CBS 767 / BCRC 21394 / JCM 1990 / NBRC 0083 / IGC 2968</strain>
    </source>
</reference>
<protein>
    <recommendedName>
        <fullName>Increased rDNA silencing protein 4</fullName>
    </recommendedName>
</protein>
<gene>
    <name type="primary">IRS4</name>
    <name type="ordered locus">DEHA2D16236g</name>
</gene>
<name>IRS4_DEBHA</name>
<organism>
    <name type="scientific">Debaryomyces hansenii (strain ATCC 36239 / CBS 767 / BCRC 21394 / JCM 1990 / NBRC 0083 / IGC 2968)</name>
    <name type="common">Yeast</name>
    <name type="synonym">Torulaspora hansenii</name>
    <dbReference type="NCBI Taxonomy" id="284592"/>
    <lineage>
        <taxon>Eukaryota</taxon>
        <taxon>Fungi</taxon>
        <taxon>Dikarya</taxon>
        <taxon>Ascomycota</taxon>
        <taxon>Saccharomycotina</taxon>
        <taxon>Pichiomycetes</taxon>
        <taxon>Debaryomycetaceae</taxon>
        <taxon>Debaryomyces</taxon>
    </lineage>
</organism>